<feature type="chain" id="PRO_0000429982" description="CRISPR-associated endonuclease Cas9">
    <location>
        <begin position="1"/>
        <end position="1101"/>
    </location>
</feature>
<feature type="domain" description="HNH Cas9-type" evidence="3">
    <location>
        <begin position="513"/>
        <end position="675"/>
    </location>
</feature>
<feature type="region of interest" description="RuvC-I" evidence="8">
    <location>
        <begin position="1"/>
        <end position="64"/>
    </location>
</feature>
<feature type="region of interest" description="Recognition lobe" evidence="8">
    <location>
        <begin position="64"/>
        <end position="468"/>
    </location>
</feature>
<feature type="region of interest" description="Disordered" evidence="4">
    <location>
        <begin position="253"/>
        <end position="273"/>
    </location>
</feature>
<feature type="region of interest" description="RuvC-II" evidence="8">
    <location>
        <begin position="468"/>
        <end position="513"/>
    </location>
</feature>
<feature type="region of interest" description="RuvC-III" evidence="8">
    <location>
        <begin position="674"/>
        <end position="822"/>
    </location>
</feature>
<feature type="region of interest" description="PAM-interacting domain (PI)" evidence="8">
    <location>
        <begin position="924"/>
        <end position="1101"/>
    </location>
</feature>
<feature type="active site" description="For RuvC-like nuclease domain" evidence="2">
    <location>
        <position position="17"/>
    </location>
</feature>
<feature type="active site" description="Proton acceptor for HNH nuclease domain" evidence="5">
    <location>
        <position position="582"/>
    </location>
</feature>
<feature type="binding site" evidence="5">
    <location>
        <position position="17"/>
    </location>
    <ligand>
        <name>Mn(2+)</name>
        <dbReference type="ChEBI" id="CHEBI:29035"/>
        <label>1</label>
    </ligand>
</feature>
<feature type="binding site" evidence="5">
    <location>
        <position position="17"/>
    </location>
    <ligand>
        <name>Mn(2+)</name>
        <dbReference type="ChEBI" id="CHEBI:29035"/>
        <label>2</label>
    </ligand>
</feature>
<feature type="binding site" evidence="5">
    <location>
        <position position="505"/>
    </location>
    <ligand>
        <name>Mn(2+)</name>
        <dbReference type="ChEBI" id="CHEBI:29035"/>
        <label>2</label>
    </ligand>
</feature>
<feature type="binding site" evidence="5">
    <location>
        <position position="566"/>
    </location>
    <ligand>
        <name>Zn(2+)</name>
        <dbReference type="ChEBI" id="CHEBI:29105"/>
    </ligand>
</feature>
<feature type="binding site" evidence="5">
    <location>
        <position position="569"/>
    </location>
    <ligand>
        <name>Zn(2+)</name>
        <dbReference type="ChEBI" id="CHEBI:29105"/>
    </ligand>
</feature>
<feature type="binding site" evidence="5">
    <location>
        <position position="581"/>
    </location>
    <ligand>
        <name>Mg(2+)</name>
        <dbReference type="ChEBI" id="CHEBI:18420"/>
        <label>1</label>
        <note>catalytic</note>
    </ligand>
</feature>
<feature type="binding site" evidence="5">
    <location>
        <position position="586"/>
    </location>
    <ligand>
        <name>Mg(2+)</name>
        <dbReference type="ChEBI" id="CHEBI:18420"/>
        <label>2</label>
    </ligand>
</feature>
<feature type="binding site" evidence="5">
    <location>
        <position position="588"/>
    </location>
    <ligand>
        <name>Mg(2+)</name>
        <dbReference type="ChEBI" id="CHEBI:18420"/>
        <label>2</label>
    </ligand>
</feature>
<feature type="binding site" evidence="5">
    <location>
        <position position="590"/>
    </location>
    <ligand>
        <name>Mg(2+)</name>
        <dbReference type="ChEBI" id="CHEBI:18420"/>
        <label>2</label>
    </ligand>
</feature>
<feature type="binding site" evidence="5">
    <location>
        <position position="602"/>
    </location>
    <ligand>
        <name>Zn(2+)</name>
        <dbReference type="ChEBI" id="CHEBI:29105"/>
    </ligand>
</feature>
<feature type="binding site" evidence="5">
    <location>
        <position position="605"/>
    </location>
    <ligand>
        <name>Zn(2+)</name>
        <dbReference type="ChEBI" id="CHEBI:29105"/>
    </ligand>
</feature>
<feature type="binding site" evidence="5">
    <location>
        <position position="606"/>
    </location>
    <ligand>
        <name>Mg(2+)</name>
        <dbReference type="ChEBI" id="CHEBI:18420"/>
        <label>1</label>
        <note>catalytic</note>
    </ligand>
</feature>
<feature type="binding site" evidence="5">
    <location>
        <position position="736"/>
    </location>
    <ligand>
        <name>Mn(2+)</name>
        <dbReference type="ChEBI" id="CHEBI:29035"/>
        <label>1</label>
    </ligand>
</feature>
<feature type="strand" evidence="11">
    <location>
        <begin position="11"/>
        <end position="18"/>
    </location>
</feature>
<feature type="strand" evidence="11">
    <location>
        <begin position="20"/>
        <end position="30"/>
    </location>
</feature>
<feature type="strand" evidence="11">
    <location>
        <begin position="36"/>
        <end position="46"/>
    </location>
</feature>
<feature type="helix" evidence="11">
    <location>
        <begin position="66"/>
        <end position="91"/>
    </location>
</feature>
<feature type="turn" evidence="11">
    <location>
        <begin position="92"/>
        <end position="94"/>
    </location>
</feature>
<feature type="helix" evidence="11">
    <location>
        <begin position="138"/>
        <end position="147"/>
    </location>
</feature>
<feature type="turn" evidence="11">
    <location>
        <begin position="148"/>
        <end position="153"/>
    </location>
</feature>
<feature type="strand" evidence="11">
    <location>
        <begin position="227"/>
        <end position="230"/>
    </location>
</feature>
<feature type="helix" evidence="11">
    <location>
        <begin position="237"/>
        <end position="242"/>
    </location>
</feature>
<feature type="helix" evidence="11">
    <location>
        <begin position="243"/>
        <end position="246"/>
    </location>
</feature>
<feature type="turn" evidence="11">
    <location>
        <begin position="247"/>
        <end position="249"/>
    </location>
</feature>
<feature type="strand" evidence="11">
    <location>
        <begin position="256"/>
        <end position="258"/>
    </location>
</feature>
<feature type="helix" evidence="11">
    <location>
        <begin position="278"/>
        <end position="290"/>
    </location>
</feature>
<feature type="strand" evidence="11">
    <location>
        <begin position="293"/>
        <end position="297"/>
    </location>
</feature>
<feature type="strand" evidence="11">
    <location>
        <begin position="301"/>
        <end position="303"/>
    </location>
</feature>
<feature type="helix" evidence="11">
    <location>
        <begin position="306"/>
        <end position="318"/>
    </location>
</feature>
<feature type="helix" evidence="11">
    <location>
        <begin position="326"/>
        <end position="333"/>
    </location>
</feature>
<feature type="helix" evidence="11">
    <location>
        <begin position="337"/>
        <end position="339"/>
    </location>
</feature>
<feature type="helix" evidence="11">
    <location>
        <begin position="361"/>
        <end position="368"/>
    </location>
</feature>
<feature type="helix" evidence="11">
    <location>
        <begin position="372"/>
        <end position="379"/>
    </location>
</feature>
<feature type="helix" evidence="11">
    <location>
        <begin position="384"/>
        <end position="394"/>
    </location>
</feature>
<feature type="helix" evidence="11">
    <location>
        <begin position="401"/>
        <end position="404"/>
    </location>
</feature>
<feature type="turn" evidence="11">
    <location>
        <begin position="405"/>
        <end position="407"/>
    </location>
</feature>
<feature type="turn" evidence="11">
    <location>
        <begin position="410"/>
        <end position="414"/>
    </location>
</feature>
<feature type="helix" evidence="11">
    <location>
        <begin position="415"/>
        <end position="418"/>
    </location>
</feature>
<feature type="helix" evidence="11">
    <location>
        <begin position="431"/>
        <end position="443"/>
    </location>
</feature>
<feature type="helix" evidence="11">
    <location>
        <begin position="448"/>
        <end position="456"/>
    </location>
</feature>
<feature type="helix" evidence="11">
    <location>
        <begin position="476"/>
        <end position="496"/>
    </location>
</feature>
<feature type="strand" evidence="11">
    <location>
        <begin position="500"/>
        <end position="505"/>
    </location>
</feature>
<feature type="helix" evidence="11">
    <location>
        <begin position="514"/>
        <end position="542"/>
    </location>
</feature>
<feature type="helix" evidence="11">
    <location>
        <begin position="550"/>
        <end position="561"/>
    </location>
</feature>
<feature type="turn" evidence="11">
    <location>
        <begin position="567"/>
        <end position="569"/>
    </location>
</feature>
<feature type="turn" evidence="11">
    <location>
        <begin position="575"/>
        <end position="577"/>
    </location>
</feature>
<feature type="strand" evidence="11">
    <location>
        <begin position="579"/>
        <end position="584"/>
    </location>
</feature>
<feature type="strand" evidence="11">
    <location>
        <begin position="586"/>
        <end position="590"/>
    </location>
</feature>
<feature type="helix" evidence="11">
    <location>
        <begin position="595"/>
        <end position="597"/>
    </location>
</feature>
<feature type="strand" evidence="11">
    <location>
        <begin position="598"/>
        <end position="601"/>
    </location>
</feature>
<feature type="helix" evidence="11">
    <location>
        <begin position="603"/>
        <end position="609"/>
    </location>
</feature>
<feature type="helix" evidence="11">
    <location>
        <begin position="614"/>
        <end position="621"/>
    </location>
</feature>
<feature type="helix" evidence="11">
    <location>
        <begin position="628"/>
        <end position="636"/>
    </location>
</feature>
<feature type="helix" evidence="11">
    <location>
        <begin position="647"/>
        <end position="662"/>
    </location>
</feature>
<feature type="turn" evidence="11">
    <location>
        <begin position="672"/>
        <end position="675"/>
    </location>
</feature>
<feature type="helix" evidence="11">
    <location>
        <begin position="680"/>
        <end position="692"/>
    </location>
</feature>
<feature type="strand" evidence="11">
    <location>
        <begin position="696"/>
        <end position="701"/>
    </location>
</feature>
<feature type="helix" evidence="11">
    <location>
        <begin position="705"/>
        <end position="713"/>
    </location>
</feature>
<feature type="turn" evidence="11">
    <location>
        <begin position="716"/>
        <end position="718"/>
    </location>
</feature>
<feature type="helix" evidence="11">
    <location>
        <begin position="735"/>
        <end position="745"/>
    </location>
</feature>
<feature type="helix" evidence="11">
    <location>
        <begin position="748"/>
        <end position="766"/>
    </location>
</feature>
<feature type="helix" evidence="11">
    <location>
        <begin position="773"/>
        <end position="775"/>
    </location>
</feature>
<feature type="helix" evidence="11">
    <location>
        <begin position="781"/>
        <end position="806"/>
    </location>
</feature>
<feature type="strand" evidence="11">
    <location>
        <begin position="810"/>
        <end position="813"/>
    </location>
</feature>
<feature type="strand" evidence="11">
    <location>
        <begin position="834"/>
        <end position="837"/>
    </location>
</feature>
<feature type="helix" evidence="11">
    <location>
        <begin position="838"/>
        <end position="840"/>
    </location>
</feature>
<feature type="helix" evidence="11">
    <location>
        <begin position="844"/>
        <end position="848"/>
    </location>
</feature>
<feature type="strand" evidence="11">
    <location>
        <begin position="850"/>
        <end position="852"/>
    </location>
</feature>
<feature type="helix" evidence="11">
    <location>
        <begin position="853"/>
        <end position="860"/>
    </location>
</feature>
<feature type="turn" evidence="11">
    <location>
        <begin position="867"/>
        <end position="869"/>
    </location>
</feature>
<feature type="strand" evidence="11">
    <location>
        <begin position="878"/>
        <end position="881"/>
    </location>
</feature>
<feature type="strand" evidence="11">
    <location>
        <begin position="884"/>
        <end position="887"/>
    </location>
</feature>
<feature type="strand" evidence="11">
    <location>
        <begin position="890"/>
        <end position="894"/>
    </location>
</feature>
<feature type="strand" evidence="10">
    <location>
        <begin position="900"/>
        <end position="902"/>
    </location>
</feature>
<feature type="strand" evidence="11">
    <location>
        <begin position="911"/>
        <end position="915"/>
    </location>
</feature>
<feature type="strand" evidence="11">
    <location>
        <begin position="918"/>
        <end position="921"/>
    </location>
</feature>
<feature type="strand" evidence="11">
    <location>
        <begin position="926"/>
        <end position="934"/>
    </location>
</feature>
<feature type="strand" evidence="11">
    <location>
        <begin position="936"/>
        <end position="938"/>
    </location>
</feature>
<feature type="strand" evidence="11">
    <location>
        <begin position="940"/>
        <end position="947"/>
    </location>
</feature>
<feature type="helix" evidence="11">
    <location>
        <begin position="948"/>
        <end position="954"/>
    </location>
</feature>
<feature type="turn" evidence="11">
    <location>
        <begin position="959"/>
        <end position="961"/>
    </location>
</feature>
<feature type="helix" evidence="11">
    <location>
        <begin position="969"/>
        <end position="972"/>
    </location>
</feature>
<feature type="helix" evidence="11">
    <location>
        <begin position="976"/>
        <end position="983"/>
    </location>
</feature>
<feature type="strand" evidence="11">
    <location>
        <begin position="987"/>
        <end position="993"/>
    </location>
</feature>
<feature type="strand" evidence="11">
    <location>
        <begin position="998"/>
        <end position="1000"/>
    </location>
</feature>
<feature type="helix" evidence="11">
    <location>
        <begin position="1009"/>
        <end position="1017"/>
    </location>
</feature>
<feature type="strand" evidence="11">
    <location>
        <begin position="1023"/>
        <end position="1031"/>
    </location>
</feature>
<feature type="strand" evidence="11">
    <location>
        <begin position="1034"/>
        <end position="1042"/>
    </location>
</feature>
<feature type="helix" evidence="11">
    <location>
        <begin position="1044"/>
        <end position="1046"/>
    </location>
</feature>
<feature type="helix" evidence="11">
    <location>
        <begin position="1052"/>
        <end position="1058"/>
    </location>
</feature>
<feature type="strand" evidence="11">
    <location>
        <begin position="1063"/>
        <end position="1066"/>
    </location>
</feature>
<feature type="helix" evidence="11">
    <location>
        <begin position="1067"/>
        <end position="1072"/>
    </location>
</feature>
<feature type="strand" evidence="11">
    <location>
        <begin position="1076"/>
        <end position="1078"/>
    </location>
</feature>
<proteinExistence type="evidence at protein level"/>
<keyword id="KW-0002">3D-structure</keyword>
<keyword id="KW-0051">Antiviral defense</keyword>
<keyword id="KW-0238">DNA-binding</keyword>
<keyword id="KW-0255">Endonuclease</keyword>
<keyword id="KW-0378">Hydrolase</keyword>
<keyword id="KW-0460">Magnesium</keyword>
<keyword id="KW-0464">Manganese</keyword>
<keyword id="KW-0479">Metal-binding</keyword>
<keyword id="KW-0540">Nuclease</keyword>
<keyword id="KW-0694">RNA-binding</keyword>
<keyword id="KW-0862">Zinc</keyword>
<name>CAS9_ACTNH</name>
<comment type="function">
    <text evidence="1 5">CRISPR (clustered regularly interspaced short palindromic repeat) is an adaptive immune system that provides protection against mobile genetic elements (viruses, transposable elements and conjugative plasmids). CRISPR clusters contain spacers, sequences complementary to antecedent mobile elements, and target invading nucleic acids. CRISPR clusters are transcribed and processed into CRISPR RNA (crRNA). In type II CRISPR systems correct processing of pre-crRNA requires a trans-encoded small RNA (tracrRNA), endogenous ribonuclease 3 (rnc) and this protein. The tracrRNA serves as a guide for ribonuclease 3-aided processing of pre-crRNA. Subsequently Cas9/crRNA/tracrRNA endonucleolytically cleaves linear or circular dsDNA target complementary to the spacer; Cas9 is inactive in the absence of the 2 guide RNAs (gRNA). Cas9 recognizes the protospacer adjacent motif (PAM) in the CRISPR repeat sequences to help distinguish self versus nonself, as targets within the bacterial CRISPR locus do not have PAMs. PAM recognition is also required for catalytic activity (By similarity).</text>
</comment>
<comment type="cofactor">
    <cofactor evidence="5">
        <name>Mg(2+)</name>
        <dbReference type="ChEBI" id="CHEBI:18420"/>
    </cofactor>
    <text evidence="5">Binds 2 Mg(2+) per subunit.</text>
</comment>
<comment type="cofactor">
    <cofactor evidence="5">
        <name>Mn(2+)</name>
        <dbReference type="ChEBI" id="CHEBI:29035"/>
    </cofactor>
    <text evidence="5">Binds 2 Mn(2+) per subunit.</text>
</comment>
<comment type="cofactor">
    <cofactor evidence="5">
        <name>Zn(2+)</name>
        <dbReference type="ChEBI" id="CHEBI:29105"/>
    </cofactor>
    <text evidence="5">Binds 1 Zn(2+) per subunit, which may stabilize the HNH Cas9 architecture.</text>
</comment>
<comment type="subunit">
    <text evidence="8">Monomer. Binds crRNA and tracrRNA (Probable).</text>
</comment>
<comment type="domain">
    <text evidence="8">Has 2 endonuclease domains. The discontinuous RuvC-like domain cleaves the target DNA noncomplementary to crRNA while the HNH nuclease domain cleaves the target DNA complementary to crRNA (Probable).</text>
</comment>
<comment type="biotechnology">
    <text evidence="8 9">The simplicity of the Cas9-gRNAs RNA-directed DNA endonuclease activity may be used to target and modify a DNA sequence of interest.</text>
</comment>
<comment type="similarity">
    <text evidence="7">Belongs to the CRISPR-associated protein Cas9 family. Subtype II-C subfamily.</text>
</comment>
<accession>J3F2B0</accession>
<reference key="1">
    <citation type="submission" date="2012-07" db="EMBL/GenBank/DDBJ databases">
        <authorList>
            <person name="Durkin A.S."/>
            <person name="McCorrison J."/>
            <person name="Torralba M."/>
            <person name="Gillis M."/>
            <person name="Methe B."/>
            <person name="Sutton G."/>
            <person name="Nelson K.E."/>
        </authorList>
    </citation>
    <scope>NUCLEOTIDE SEQUENCE [LARGE SCALE GENOMIC DNA]</scope>
    <source>
        <strain>ATCC 12104 / DSM 43013 / CCUG 2238 / JCM 8349 / NCTC 10301 / Howell 279</strain>
    </source>
</reference>
<reference key="2">
    <citation type="journal article" date="2023" name="Nat. Commun.">
        <title>Assessing and advancing the safety of CRISPR-Cas tools: from DNA to RNA editing.</title>
        <authorList>
            <person name="Tao J."/>
            <person name="Bauer D.E."/>
            <person name="Chiarle R."/>
        </authorList>
    </citation>
    <scope>REVIEW ON SAFETY OF GENOME EDITING TOOLS</scope>
</reference>
<reference key="3">
    <citation type="journal article" date="2014" name="Science">
        <title>Structures of Cas9 endonucleases reveal RNA-mediated conformational activation.</title>
        <authorList>
            <person name="Jinek M."/>
            <person name="Jiang F."/>
            <person name="Taylor D.W."/>
            <person name="Sternberg S.H."/>
            <person name="Kaya E."/>
            <person name="Ma E."/>
            <person name="Anders C."/>
            <person name="Hauer M."/>
            <person name="Zhou K."/>
            <person name="Lin S."/>
            <person name="Kaplan M."/>
            <person name="Iavarone A.T."/>
            <person name="Charpentier E."/>
            <person name="Nogales E."/>
            <person name="Doudna J.A."/>
        </authorList>
    </citation>
    <scope>X-RAY CRYSTALLOGRAPHY (2.20 ANGSTROMS) IN COMPLEX WITH MAGNESIUM; MANGANESE AND ZINC</scope>
    <scope>FUNCTION</scope>
    <scope>ACTIVE SITE</scope>
    <scope>COFACTOR</scope>
    <scope>DOMAIN</scope>
    <scope>POSSIBLE BIOTECHNOLOGY</scope>
    <source>
        <strain>ATCC 12104 / DSM 43013 / CCUG 2238 / JCM 8349 / NCTC 10301 / Howell 279</strain>
    </source>
</reference>
<dbReference type="EC" id="3.1.-.-"/>
<dbReference type="EMBL" id="ALJK01000149">
    <property type="protein sequence ID" value="EJN84392.1"/>
    <property type="molecule type" value="Genomic_DNA"/>
</dbReference>
<dbReference type="PDB" id="4OGC">
    <property type="method" value="X-ray"/>
    <property type="resolution" value="2.80 A"/>
    <property type="chains" value="A=1-1101"/>
</dbReference>
<dbReference type="PDB" id="4OGE">
    <property type="method" value="X-ray"/>
    <property type="resolution" value="2.20 A"/>
    <property type="chains" value="A=1-1101"/>
</dbReference>
<dbReference type="PDBsum" id="4OGC"/>
<dbReference type="PDBsum" id="4OGE"/>
<dbReference type="SMR" id="J3F2B0"/>
<dbReference type="PATRIC" id="fig|1115803.3.peg.1655"/>
<dbReference type="eggNOG" id="COG3513">
    <property type="taxonomic scope" value="Bacteria"/>
</dbReference>
<dbReference type="EvolutionaryTrace" id="J3F2B0"/>
<dbReference type="Proteomes" id="UP000007814">
    <property type="component" value="Unassembled WGS sequence"/>
</dbReference>
<dbReference type="GO" id="GO:0003677">
    <property type="term" value="F:DNA binding"/>
    <property type="evidence" value="ECO:0007669"/>
    <property type="project" value="UniProtKB-KW"/>
</dbReference>
<dbReference type="GO" id="GO:0004519">
    <property type="term" value="F:endonuclease activity"/>
    <property type="evidence" value="ECO:0007669"/>
    <property type="project" value="UniProtKB-KW"/>
</dbReference>
<dbReference type="GO" id="GO:0003723">
    <property type="term" value="F:RNA binding"/>
    <property type="evidence" value="ECO:0007669"/>
    <property type="project" value="UniProtKB-KW"/>
</dbReference>
<dbReference type="GO" id="GO:0008270">
    <property type="term" value="F:zinc ion binding"/>
    <property type="evidence" value="ECO:0007669"/>
    <property type="project" value="InterPro"/>
</dbReference>
<dbReference type="GO" id="GO:0051607">
    <property type="term" value="P:defense response to virus"/>
    <property type="evidence" value="ECO:0007669"/>
    <property type="project" value="UniProtKB-KW"/>
</dbReference>
<dbReference type="Gene3D" id="3.30.70.3520">
    <property type="match status" value="1"/>
</dbReference>
<dbReference type="Gene3D" id="3.30.420.10">
    <property type="entry name" value="Ribonuclease H-like superfamily/Ribonuclease H"/>
    <property type="match status" value="3"/>
</dbReference>
<dbReference type="IDEAL" id="IID90031"/>
<dbReference type="InterPro" id="IPR028629">
    <property type="entry name" value="Cas9"/>
</dbReference>
<dbReference type="InterPro" id="IPR040619">
    <property type="entry name" value="Cas9_alpha-helical_lobe"/>
</dbReference>
<dbReference type="InterPro" id="IPR040796">
    <property type="entry name" value="Cas9_b_hairpin"/>
</dbReference>
<dbReference type="InterPro" id="IPR041217">
    <property type="entry name" value="Cas9_C"/>
</dbReference>
<dbReference type="InterPro" id="IPR041225">
    <property type="entry name" value="Cas9_Topo"/>
</dbReference>
<dbReference type="InterPro" id="IPR002711">
    <property type="entry name" value="HNH"/>
</dbReference>
<dbReference type="InterPro" id="IPR033114">
    <property type="entry name" value="HNH_CAS9"/>
</dbReference>
<dbReference type="InterPro" id="IPR003615">
    <property type="entry name" value="HNH_nuc"/>
</dbReference>
<dbReference type="InterPro" id="IPR036397">
    <property type="entry name" value="RNaseH_sf"/>
</dbReference>
<dbReference type="InterPro" id="IPR041383">
    <property type="entry name" value="RuvC_III"/>
</dbReference>
<dbReference type="NCBIfam" id="TIGR01865">
    <property type="entry name" value="cas_Csn1"/>
    <property type="match status" value="1"/>
</dbReference>
<dbReference type="Pfam" id="PF18470">
    <property type="entry name" value="Cas9_a"/>
    <property type="match status" value="1"/>
</dbReference>
<dbReference type="Pfam" id="PF17893">
    <property type="entry name" value="Cas9_b_hairpin"/>
    <property type="match status" value="1"/>
</dbReference>
<dbReference type="Pfam" id="PF18525">
    <property type="entry name" value="Cas9_C"/>
    <property type="match status" value="1"/>
</dbReference>
<dbReference type="Pfam" id="PF17894">
    <property type="entry name" value="Cas9_Topo"/>
    <property type="match status" value="1"/>
</dbReference>
<dbReference type="Pfam" id="PF01844">
    <property type="entry name" value="HNH"/>
    <property type="match status" value="1"/>
</dbReference>
<dbReference type="Pfam" id="PF18541">
    <property type="entry name" value="RuvC_III"/>
    <property type="match status" value="1"/>
</dbReference>
<dbReference type="SMART" id="SM00507">
    <property type="entry name" value="HNHc"/>
    <property type="match status" value="1"/>
</dbReference>
<dbReference type="PROSITE" id="PS51749">
    <property type="entry name" value="HNH_CAS9"/>
    <property type="match status" value="1"/>
</dbReference>
<gene>
    <name type="primary">cas9</name>
    <name type="ORF">HMPREF1129_2620</name>
</gene>
<evidence type="ECO:0000250" key="1"/>
<evidence type="ECO:0000250" key="2">
    <source>
        <dbReference type="UniProtKB" id="Q99ZW2"/>
    </source>
</evidence>
<evidence type="ECO:0000255" key="3">
    <source>
        <dbReference type="PROSITE-ProRule" id="PRU01085"/>
    </source>
</evidence>
<evidence type="ECO:0000256" key="4">
    <source>
        <dbReference type="SAM" id="MobiDB-lite"/>
    </source>
</evidence>
<evidence type="ECO:0000269" key="5">
    <source>
    </source>
</evidence>
<evidence type="ECO:0000303" key="6">
    <source>
    </source>
</evidence>
<evidence type="ECO:0000305" key="7"/>
<evidence type="ECO:0000305" key="8">
    <source>
    </source>
</evidence>
<evidence type="ECO:0000305" key="9">
    <source>
    </source>
</evidence>
<evidence type="ECO:0007829" key="10">
    <source>
        <dbReference type="PDB" id="4OGC"/>
    </source>
</evidence>
<evidence type="ECO:0007829" key="11">
    <source>
        <dbReference type="PDB" id="4OGE"/>
    </source>
</evidence>
<sequence>MWYASLMSAHHLRVGIDVGTHSVGLATLRVDDHGTPIELLSALSHIHDSGVGKEGKKDHDTRKKLSGIARRARRLLHHRRTQLQQLDEVLRDLGFPIPTPGEFLDLNEQTDPYRVWRVRARLVEEKLPEELRGPAISMAVRHIARHRGWRNPYSKVESLLSPAEESPFMKALRERILATTGEVLDDGITPGQAMAQVALTHNISMRGPEGILGKLHQSDNANEIRKICARQGVSPDVCKQLLRAVFKADSPRGSAVSRVAPDPLPGQGSFRRAPKCDPEFQRFRIISIVANLRISETKGENRPLTADERRHVVTFLTEDSQADLTWVDVAEKLGVHRRDLRGTAVHTDDGERSAARPPIDATDRIMRQTKISSLKTWWEEADSEQRGAMIRYLYEDPTDSECAEIIAELPEEDQAKLDSLHLPAGRAAYSRESLTALSDHMLATTDDLHEARKRLFGVDDSWAPPAEAINAPVGNPSVDRTLKIVGRYLSAVESMWGTPEVIHVEHVRDGFTSERMADERDKANRRRYNDNQEAMKKIQRDYGKEGYISRGDIVRLDALELQGCACLYCGTTIGYHTCQLDHIVPQAGPGSNNRRGNLVAVCERCNRSKSNTPFAVWAQKCGIPHVGVKEAIGRVRGWRKQTPNTSSEDLTRLKKEVIARLRRTQEDPEIDERSMESVAWMANELHHRIAAAYPETTVMVYRGSITAAARKAAGIDSRINLIGEKGRKDRIDRRHHAVDASVVALMEASVAKTLAERSSLRGEQRLTGKEQTWKQYTGSTVGAREHFEMWRGHMLHLTELFNERLAEDKVYVTQNIRLRLSDGNAHTVNPSKLVSHRLGDGLTVQQIDRACTPALWCALTREKDFDEKNGLPAREDRAIRVHGHEIKSSDYIQVFSKRKKTDSDRDETPFGAIAVRGGFVEIGPSIHHARIYRVEGKKPVYAMLRVFTHDLLSQRHGDLFSAVIPPQSISMRCAEPKLRKAITTGNATYLGWVVVGDELEINVDSFTKYAIGRFLEDFPNTTRWRICGYDTNSKLTLKPIVLAAEGLENPSSAVNEIVELKGWRVAINVLTKVHPTVVRRDALGRPRYSSRSNLPTSWTIE</sequence>
<protein>
    <recommendedName>
        <fullName>CRISPR-associated endonuclease Cas9</fullName>
        <ecNumber>3.1.-.-</ecNumber>
    </recommendedName>
    <alternativeName>
        <fullName evidence="6">AnaCas9</fullName>
    </alternativeName>
</protein>
<organism>
    <name type="scientific">Actinomyces naeslundii (strain ATCC 12104 / DSM 43013 / CCUG 2238 / JCM 8349 / NCTC 10301 / Howell 279)</name>
    <dbReference type="NCBI Taxonomy" id="1115803"/>
    <lineage>
        <taxon>Bacteria</taxon>
        <taxon>Bacillati</taxon>
        <taxon>Actinomycetota</taxon>
        <taxon>Actinomycetes</taxon>
        <taxon>Actinomycetales</taxon>
        <taxon>Actinomycetaceae</taxon>
        <taxon>Actinomyces</taxon>
    </lineage>
</organism>